<reference key="1">
    <citation type="journal article" date="2008" name="J. Bacteriol.">
        <title>The pangenome structure of Escherichia coli: comparative genomic analysis of E. coli commensal and pathogenic isolates.</title>
        <authorList>
            <person name="Rasko D.A."/>
            <person name="Rosovitz M.J."/>
            <person name="Myers G.S.A."/>
            <person name="Mongodin E.F."/>
            <person name="Fricke W.F."/>
            <person name="Gajer P."/>
            <person name="Crabtree J."/>
            <person name="Sebaihia M."/>
            <person name="Thomson N.R."/>
            <person name="Chaudhuri R."/>
            <person name="Henderson I.R."/>
            <person name="Sperandio V."/>
            <person name="Ravel J."/>
        </authorList>
    </citation>
    <scope>NUCLEOTIDE SEQUENCE [LARGE SCALE GENOMIC DNA]</scope>
    <source>
        <strain>HS</strain>
    </source>
</reference>
<accession>A7ZXX5</accession>
<protein>
    <recommendedName>
        <fullName evidence="1">Endonuclease 8</fullName>
    </recommendedName>
    <alternativeName>
        <fullName evidence="1">DNA glycosylase/AP lyase Nei</fullName>
        <ecNumber evidence="1">3.2.2.-</ecNumber>
        <ecNumber evidence="1">4.2.99.18</ecNumber>
    </alternativeName>
    <alternativeName>
        <fullName evidence="1">DNA-(apurinic or apyrimidinic site) lyase Nei</fullName>
    </alternativeName>
    <alternativeName>
        <fullName evidence="1">Endonuclease VIII</fullName>
    </alternativeName>
</protein>
<sequence>MPEGPEIRRAADNLEAAIKGKPLTDVWFAFPQLKTYQSQLIGQHVTHVETRGKALLTHFSNDLTLYSHNQLYGVWRVVDTGEEPQTTRVLRVKLQTADKTILLYSASDIEMLRPEQLTTHPFLQRVGPDVLDPNLTPEVVKERLLSPRFRNRQFAGLLLDQAFLAGLGNYLRVEILWQVGLTGNHKAKDLNAAQLDALAHALLEIPRFSYATRGQVDENKHHGALFRFKVFHRDGEPCERCGSIIEKTTLSSRPFYWCPGCQH</sequence>
<keyword id="KW-0227">DNA damage</keyword>
<keyword id="KW-0234">DNA repair</keyword>
<keyword id="KW-0238">DNA-binding</keyword>
<keyword id="KW-0326">Glycosidase</keyword>
<keyword id="KW-0378">Hydrolase</keyword>
<keyword id="KW-0456">Lyase</keyword>
<keyword id="KW-0479">Metal-binding</keyword>
<keyword id="KW-0511">Multifunctional enzyme</keyword>
<keyword id="KW-0862">Zinc</keyword>
<keyword id="KW-0863">Zinc-finger</keyword>
<organism>
    <name type="scientific">Escherichia coli O9:H4 (strain HS)</name>
    <dbReference type="NCBI Taxonomy" id="331112"/>
    <lineage>
        <taxon>Bacteria</taxon>
        <taxon>Pseudomonadati</taxon>
        <taxon>Pseudomonadota</taxon>
        <taxon>Gammaproteobacteria</taxon>
        <taxon>Enterobacterales</taxon>
        <taxon>Enterobacteriaceae</taxon>
        <taxon>Escherichia</taxon>
    </lineage>
</organism>
<gene>
    <name evidence="1" type="primary">nei</name>
    <name type="ordered locus">EcHS_A0762</name>
</gene>
<evidence type="ECO:0000255" key="1">
    <source>
        <dbReference type="HAMAP-Rule" id="MF_01253"/>
    </source>
</evidence>
<feature type="initiator methionine" description="Removed" evidence="1">
    <location>
        <position position="1"/>
    </location>
</feature>
<feature type="chain" id="PRO_1000067200" description="Endonuclease 8">
    <location>
        <begin position="2"/>
        <end position="263"/>
    </location>
</feature>
<feature type="zinc finger region" description="FPG-type" evidence="1">
    <location>
        <begin position="229"/>
        <end position="263"/>
    </location>
</feature>
<feature type="active site" description="Schiff-base intermediate with DNA" evidence="1">
    <location>
        <position position="2"/>
    </location>
</feature>
<feature type="active site" description="Proton donor" evidence="1">
    <location>
        <position position="3"/>
    </location>
</feature>
<feature type="active site" description="Proton donor; for beta-elimination activity" evidence="1">
    <location>
        <position position="53"/>
    </location>
</feature>
<feature type="active site" description="Proton donor; for delta-elimination activity" evidence="1">
    <location>
        <position position="253"/>
    </location>
</feature>
<feature type="binding site" evidence="1">
    <location>
        <position position="70"/>
    </location>
    <ligand>
        <name>DNA</name>
        <dbReference type="ChEBI" id="CHEBI:16991"/>
    </ligand>
</feature>
<feature type="binding site" evidence="1">
    <location>
        <position position="125"/>
    </location>
    <ligand>
        <name>DNA</name>
        <dbReference type="ChEBI" id="CHEBI:16991"/>
    </ligand>
</feature>
<feature type="binding site" evidence="1">
    <location>
        <position position="169"/>
    </location>
    <ligand>
        <name>DNA</name>
        <dbReference type="ChEBI" id="CHEBI:16991"/>
    </ligand>
</feature>
<proteinExistence type="inferred from homology"/>
<dbReference type="EC" id="3.2.2.-" evidence="1"/>
<dbReference type="EC" id="4.2.99.18" evidence="1"/>
<dbReference type="EMBL" id="CP000802">
    <property type="protein sequence ID" value="ABV05129.1"/>
    <property type="molecule type" value="Genomic_DNA"/>
</dbReference>
<dbReference type="RefSeq" id="WP_001114026.1">
    <property type="nucleotide sequence ID" value="NC_009800.1"/>
</dbReference>
<dbReference type="SMR" id="A7ZXX5"/>
<dbReference type="KEGG" id="ecx:EcHS_A0762"/>
<dbReference type="HOGENOM" id="CLU_038423_2_2_6"/>
<dbReference type="GO" id="GO:0140078">
    <property type="term" value="F:class I DNA-(apurinic or apyrimidinic site) endonuclease activity"/>
    <property type="evidence" value="ECO:0007669"/>
    <property type="project" value="UniProtKB-EC"/>
</dbReference>
<dbReference type="GO" id="GO:0003684">
    <property type="term" value="F:damaged DNA binding"/>
    <property type="evidence" value="ECO:0007669"/>
    <property type="project" value="InterPro"/>
</dbReference>
<dbReference type="GO" id="GO:0000703">
    <property type="term" value="F:oxidized pyrimidine nucleobase lesion DNA N-glycosylase activity"/>
    <property type="evidence" value="ECO:0007669"/>
    <property type="project" value="UniProtKB-UniRule"/>
</dbReference>
<dbReference type="GO" id="GO:0008270">
    <property type="term" value="F:zinc ion binding"/>
    <property type="evidence" value="ECO:0007669"/>
    <property type="project" value="UniProtKB-UniRule"/>
</dbReference>
<dbReference type="GO" id="GO:0006284">
    <property type="term" value="P:base-excision repair"/>
    <property type="evidence" value="ECO:0007669"/>
    <property type="project" value="InterPro"/>
</dbReference>
<dbReference type="CDD" id="cd08965">
    <property type="entry name" value="EcNei-like_N"/>
    <property type="match status" value="1"/>
</dbReference>
<dbReference type="FunFam" id="1.10.8.50:FF:000005">
    <property type="entry name" value="Endonuclease 8"/>
    <property type="match status" value="1"/>
</dbReference>
<dbReference type="FunFam" id="3.20.190.10:FF:000002">
    <property type="entry name" value="Endonuclease 8"/>
    <property type="match status" value="1"/>
</dbReference>
<dbReference type="Gene3D" id="1.10.8.50">
    <property type="match status" value="1"/>
</dbReference>
<dbReference type="Gene3D" id="3.20.190.10">
    <property type="entry name" value="MutM-like, N-terminal"/>
    <property type="match status" value="1"/>
</dbReference>
<dbReference type="HAMAP" id="MF_01253">
    <property type="entry name" value="Endonuclease_8"/>
    <property type="match status" value="1"/>
</dbReference>
<dbReference type="InterPro" id="IPR015886">
    <property type="entry name" value="DNA_glyclase/AP_lyase_DNA-bd"/>
</dbReference>
<dbReference type="InterPro" id="IPR015887">
    <property type="entry name" value="DNA_glyclase_Znf_dom_DNA_BS"/>
</dbReference>
<dbReference type="InterPro" id="IPR044091">
    <property type="entry name" value="EcNei-like_N"/>
</dbReference>
<dbReference type="InterPro" id="IPR023713">
    <property type="entry name" value="Endonuclease-VIII"/>
</dbReference>
<dbReference type="InterPro" id="IPR012319">
    <property type="entry name" value="FPG_cat"/>
</dbReference>
<dbReference type="InterPro" id="IPR035937">
    <property type="entry name" value="MutM-like_N-ter"/>
</dbReference>
<dbReference type="InterPro" id="IPR010979">
    <property type="entry name" value="Ribosomal_uS13-like_H2TH"/>
</dbReference>
<dbReference type="InterPro" id="IPR000214">
    <property type="entry name" value="Znf_DNA_glyclase/AP_lyase"/>
</dbReference>
<dbReference type="InterPro" id="IPR010663">
    <property type="entry name" value="Znf_FPG/IleRS"/>
</dbReference>
<dbReference type="NCBIfam" id="NF007763">
    <property type="entry name" value="PRK10445.1"/>
    <property type="match status" value="1"/>
</dbReference>
<dbReference type="PANTHER" id="PTHR42697">
    <property type="entry name" value="ENDONUCLEASE 8"/>
    <property type="match status" value="1"/>
</dbReference>
<dbReference type="PANTHER" id="PTHR42697:SF1">
    <property type="entry name" value="ENDONUCLEASE 8"/>
    <property type="match status" value="1"/>
</dbReference>
<dbReference type="Pfam" id="PF01149">
    <property type="entry name" value="Fapy_DNA_glyco"/>
    <property type="match status" value="1"/>
</dbReference>
<dbReference type="Pfam" id="PF06831">
    <property type="entry name" value="H2TH"/>
    <property type="match status" value="1"/>
</dbReference>
<dbReference type="Pfam" id="PF06827">
    <property type="entry name" value="zf-FPG_IleRS"/>
    <property type="match status" value="1"/>
</dbReference>
<dbReference type="SMART" id="SM00898">
    <property type="entry name" value="Fapy_DNA_glyco"/>
    <property type="match status" value="1"/>
</dbReference>
<dbReference type="SMART" id="SM01232">
    <property type="entry name" value="H2TH"/>
    <property type="match status" value="1"/>
</dbReference>
<dbReference type="SUPFAM" id="SSF57716">
    <property type="entry name" value="Glucocorticoid receptor-like (DNA-binding domain)"/>
    <property type="match status" value="1"/>
</dbReference>
<dbReference type="SUPFAM" id="SSF81624">
    <property type="entry name" value="N-terminal domain of MutM-like DNA repair proteins"/>
    <property type="match status" value="1"/>
</dbReference>
<dbReference type="SUPFAM" id="SSF46946">
    <property type="entry name" value="S13-like H2TH domain"/>
    <property type="match status" value="1"/>
</dbReference>
<dbReference type="PROSITE" id="PS51068">
    <property type="entry name" value="FPG_CAT"/>
    <property type="match status" value="1"/>
</dbReference>
<dbReference type="PROSITE" id="PS01242">
    <property type="entry name" value="ZF_FPG_1"/>
    <property type="match status" value="1"/>
</dbReference>
<dbReference type="PROSITE" id="PS51066">
    <property type="entry name" value="ZF_FPG_2"/>
    <property type="match status" value="1"/>
</dbReference>
<name>END8_ECOHS</name>
<comment type="function">
    <text evidence="1">Involved in base excision repair of DNA damaged by oxidation or by mutagenic agents. Acts as a DNA glycosylase that recognizes and removes damaged bases. Has a preference for oxidized pyrimidines, such as thymine glycol, 5,6-dihydrouracil and 5,6-dihydrothymine. Has AP (apurinic/apyrimidinic) lyase activity and introduces nicks in the DNA strand. Cleaves the DNA backbone by beta-delta elimination to generate a single-strand break at the site of the removed base with both 3'- and 5'-phosphates.</text>
</comment>
<comment type="catalytic activity">
    <reaction evidence="1">
        <text>2'-deoxyribonucleotide-(2'-deoxyribose 5'-phosphate)-2'-deoxyribonucleotide-DNA = a 3'-end 2'-deoxyribonucleotide-(2,3-dehydro-2,3-deoxyribose 5'-phosphate)-DNA + a 5'-end 5'-phospho-2'-deoxyribonucleoside-DNA + H(+)</text>
        <dbReference type="Rhea" id="RHEA:66592"/>
        <dbReference type="Rhea" id="RHEA-COMP:13180"/>
        <dbReference type="Rhea" id="RHEA-COMP:16897"/>
        <dbReference type="Rhea" id="RHEA-COMP:17067"/>
        <dbReference type="ChEBI" id="CHEBI:15378"/>
        <dbReference type="ChEBI" id="CHEBI:136412"/>
        <dbReference type="ChEBI" id="CHEBI:157695"/>
        <dbReference type="ChEBI" id="CHEBI:167181"/>
        <dbReference type="EC" id="4.2.99.18"/>
    </reaction>
</comment>
<comment type="cofactor">
    <cofactor evidence="1">
        <name>Zn(2+)</name>
        <dbReference type="ChEBI" id="CHEBI:29105"/>
    </cofactor>
    <text evidence="1">Binds 1 zinc ion per subunit.</text>
</comment>
<comment type="similarity">
    <text evidence="1">Belongs to the FPG family.</text>
</comment>